<comment type="function">
    <text evidence="1">One of the extrinsic, lumenal subunits of photosystem II (PSII), which stabilize and protect the oxygen-evolving complex. PSII is a light-driven water plastoquinone oxidoreductase, using light energy to abstract electrons from H(2)O, generating a proton gradient subsequently used for ATP formation. Required for dimerization of PSII and for binding of PsbQ to PSII.</text>
</comment>
<comment type="subunit">
    <text evidence="1">PSII is composed of 1 copy each of membrane proteins PsbA, PsbB, PsbC, PsbD, PsbE, PsbF, PsbH, PsbI, PsbJ, PsbK, PsbL, PsbM, PsbT, PsbX, PsbY, PsbZ, Psb30/Ycf12, peripheral proteins PsbO, CyanoQ (PsbQ), PsbU, PsbV and a large number of cofactors. It forms dimeric complexes.</text>
</comment>
<comment type="subcellular location">
    <subcellularLocation>
        <location evidence="1">Cellular thylakoid membrane</location>
        <topology evidence="1">Peripheral membrane protein</topology>
        <orientation evidence="1 4">Lumenal side</orientation>
    </subcellularLocation>
</comment>
<comment type="similarity">
    <text evidence="3">Belongs to the PsbO family.</text>
</comment>
<keyword id="KW-0903">Direct protein sequencing</keyword>
<keyword id="KW-0464">Manganese</keyword>
<keyword id="KW-0472">Membrane</keyword>
<keyword id="KW-0602">Photosynthesis</keyword>
<keyword id="KW-0604">Photosystem II</keyword>
<keyword id="KW-1185">Reference proteome</keyword>
<keyword id="KW-0732">Signal</keyword>
<keyword id="KW-0793">Thylakoid</keyword>
<sequence>MRYRAFLAAFLAVCLGVLTACSSGPTAADLGTLTYDQIKDTGLANKCLSLKESARGTIPLEAGKKYALTDLCLEPQEFFVKEEPGNKRQKAEFVPGKVLTRYTSSLDQVYGDLALKADGTVSFTEKGGIDFQAITVLLPGGEEVPFLFTVKGLVASTSEPATSINTSTDLRGGYRVPSYRTSNFLDPKARGLTTGYESAVAIPSAGDAEDLTKENVKRFVTGQGEISLAVSKVDGATGEVAGVFTAIQPSDTDMGGKEAVDVKLVGQFYGRIEPADA</sequence>
<protein>
    <recommendedName>
        <fullName>Photosystem II extrinsic protein O</fullName>
        <shortName>PsbO</shortName>
    </recommendedName>
    <alternativeName>
        <fullName>Photosystem II manganese-stabilizing polypeptide</fullName>
        <shortName evidence="2">MSP</shortName>
    </alternativeName>
</protein>
<name>PSBO_SYNE7</name>
<dbReference type="EMBL" id="J03002">
    <property type="protein sequence ID" value="AAA87283.1"/>
    <property type="molecule type" value="Genomic_DNA"/>
</dbReference>
<dbReference type="EMBL" id="CP000100">
    <property type="protein sequence ID" value="ABB56326.1"/>
    <property type="molecule type" value="Genomic_DNA"/>
</dbReference>
<dbReference type="RefSeq" id="WP_011243530.1">
    <property type="nucleotide sequence ID" value="NZ_JACJTX010000002.1"/>
</dbReference>
<dbReference type="SMR" id="P11472"/>
<dbReference type="STRING" id="1140.Synpcc7942_0294"/>
<dbReference type="PaxDb" id="1140-Synpcc7942_0294"/>
<dbReference type="KEGG" id="syf:Synpcc7942_0294"/>
<dbReference type="eggNOG" id="ENOG502Z7ZP">
    <property type="taxonomic scope" value="Bacteria"/>
</dbReference>
<dbReference type="HOGENOM" id="CLU_063138_0_0_3"/>
<dbReference type="OrthoDB" id="479833at2"/>
<dbReference type="BioCyc" id="MetaCyc:SYNPCC7942_0294-MONOMER"/>
<dbReference type="BioCyc" id="SYNEL:SYNPCC7942_0294-MONOMER"/>
<dbReference type="Proteomes" id="UP000889800">
    <property type="component" value="Chromosome"/>
</dbReference>
<dbReference type="GO" id="GO:0009654">
    <property type="term" value="C:photosystem II oxygen evolving complex"/>
    <property type="evidence" value="ECO:0007669"/>
    <property type="project" value="InterPro"/>
</dbReference>
<dbReference type="GO" id="GO:0031676">
    <property type="term" value="C:plasma membrane-derived thylakoid membrane"/>
    <property type="evidence" value="ECO:0007669"/>
    <property type="project" value="UniProtKB-SubCell"/>
</dbReference>
<dbReference type="GO" id="GO:0010242">
    <property type="term" value="F:oxygen evolving activity"/>
    <property type="evidence" value="ECO:0007669"/>
    <property type="project" value="InterPro"/>
</dbReference>
<dbReference type="GO" id="GO:0010207">
    <property type="term" value="P:photosystem II assembly"/>
    <property type="evidence" value="ECO:0007669"/>
    <property type="project" value="InterPro"/>
</dbReference>
<dbReference type="GO" id="GO:0042549">
    <property type="term" value="P:photosystem II stabilization"/>
    <property type="evidence" value="ECO:0007669"/>
    <property type="project" value="InterPro"/>
</dbReference>
<dbReference type="Gene3D" id="3.30.2050.10">
    <property type="entry name" value="photosynthetic oxygen evolving center domain"/>
    <property type="match status" value="1"/>
</dbReference>
<dbReference type="Gene3D" id="2.40.160.30">
    <property type="entry name" value="Photosystem II, cytochrome c-550 precursor"/>
    <property type="match status" value="1"/>
</dbReference>
<dbReference type="InterPro" id="IPR011250">
    <property type="entry name" value="OMP/PagP_b-brl"/>
</dbReference>
<dbReference type="InterPro" id="IPR002628">
    <property type="entry name" value="PsbO"/>
</dbReference>
<dbReference type="PANTHER" id="PTHR34058">
    <property type="entry name" value="OXYGEN-EVOLVING ENHANCER PROTEIN 1-2, CHLOROPLASTIC"/>
    <property type="match status" value="1"/>
</dbReference>
<dbReference type="Pfam" id="PF01716">
    <property type="entry name" value="MSP"/>
    <property type="match status" value="1"/>
</dbReference>
<dbReference type="SUPFAM" id="SSF56925">
    <property type="entry name" value="OMPA-like"/>
    <property type="match status" value="1"/>
</dbReference>
<reference key="1">
    <citation type="journal article" date="1987" name="Proc. Natl. Acad. Sci. U.S.A.">
        <title>Nucleotide sequence of the gene from the cyanobacterium Anacystis nidulans R2 encoding the Mn-stabilizing protein involved in photosystem II water oxidation.</title>
        <authorList>
            <person name="Kuwabara T."/>
            <person name="Reddy K.J."/>
            <person name="Sherman L.A."/>
        </authorList>
    </citation>
    <scope>NUCLEOTIDE SEQUENCE [GENOMIC DNA]</scope>
    <source>
        <strain>ATCC 33912 / PCC 7942 / FACHB-805</strain>
    </source>
</reference>
<reference key="2">
    <citation type="submission" date="2005-08" db="EMBL/GenBank/DDBJ databases">
        <title>Complete sequence of chromosome 1 of Synechococcus elongatus PCC 7942.</title>
        <authorList>
            <consortium name="US DOE Joint Genome Institute"/>
            <person name="Copeland A."/>
            <person name="Lucas S."/>
            <person name="Lapidus A."/>
            <person name="Barry K."/>
            <person name="Detter J.C."/>
            <person name="Glavina T."/>
            <person name="Hammon N."/>
            <person name="Israni S."/>
            <person name="Pitluck S."/>
            <person name="Schmutz J."/>
            <person name="Larimer F."/>
            <person name="Land M."/>
            <person name="Kyrpides N."/>
            <person name="Lykidis A."/>
            <person name="Golden S."/>
            <person name="Richardson P."/>
        </authorList>
    </citation>
    <scope>NUCLEOTIDE SEQUENCE [LARGE SCALE GENOMIC DNA]</scope>
    <source>
        <strain>ATCC 33912 / PCC 7942 / FACHB-805</strain>
    </source>
</reference>
<reference key="3">
    <citation type="journal article" date="1989" name="Eur. J. Biochem.">
        <title>Expression and processing of cyanobacterial Mn-stabilizing protein in Escherichia coli.</title>
        <authorList>
            <person name="Kuwabara T."/>
            <person name="Nagata R."/>
            <person name="Shinohara K."/>
        </authorList>
    </citation>
    <scope>PROTEIN SEQUENCE OF 28-41</scope>
</reference>
<proteinExistence type="evidence at protein level"/>
<gene>
    <name type="primary">psbO</name>
    <name evidence="2" type="synonym">woxA</name>
    <name type="ordered locus">Synpcc7942_0294</name>
</gene>
<evidence type="ECO:0000250" key="1">
    <source>
        <dbReference type="UniProtKB" id="P10549"/>
    </source>
</evidence>
<evidence type="ECO:0000303" key="2">
    <source>
    </source>
</evidence>
<evidence type="ECO:0000305" key="3"/>
<evidence type="ECO:0000305" key="4">
    <source>
    </source>
</evidence>
<organism>
    <name type="scientific">Synechococcus elongatus (strain ATCC 33912 / PCC 7942 / FACHB-805)</name>
    <name type="common">Anacystis nidulans R2</name>
    <dbReference type="NCBI Taxonomy" id="1140"/>
    <lineage>
        <taxon>Bacteria</taxon>
        <taxon>Bacillati</taxon>
        <taxon>Cyanobacteriota</taxon>
        <taxon>Cyanophyceae</taxon>
        <taxon>Synechococcales</taxon>
        <taxon>Synechococcaceae</taxon>
        <taxon>Synechococcus</taxon>
    </lineage>
</organism>
<accession>P11472</accession>
<accession>Q31RJ3</accession>
<feature type="signal peptide" evidence="4">
    <location>
        <begin position="1"/>
        <end position="27"/>
    </location>
</feature>
<feature type="chain" id="PRO_0000029569" description="Photosystem II extrinsic protein O">
    <location>
        <begin position="28"/>
        <end position="277"/>
    </location>
</feature>